<protein>
    <recommendedName>
        <fullName evidence="1">ATP synthase subunit beta, chloroplastic</fullName>
        <ecNumber evidence="1">7.1.2.2</ecNumber>
    </recommendedName>
    <alternativeName>
        <fullName evidence="1">ATP synthase F1 sector subunit beta</fullName>
    </alternativeName>
    <alternativeName>
        <fullName evidence="1">F-ATPase subunit beta</fullName>
    </alternativeName>
</protein>
<dbReference type="EC" id="7.1.2.2" evidence="1"/>
<dbReference type="EMBL" id="X60329">
    <property type="protein sequence ID" value="CAA42899.1"/>
    <property type="molecule type" value="Genomic_DNA"/>
</dbReference>
<dbReference type="PIR" id="S20848">
    <property type="entry name" value="PWPFBL"/>
</dbReference>
<dbReference type="SMR" id="P26532"/>
<dbReference type="GO" id="GO:0009535">
    <property type="term" value="C:chloroplast thylakoid membrane"/>
    <property type="evidence" value="ECO:0007669"/>
    <property type="project" value="UniProtKB-SubCell"/>
</dbReference>
<dbReference type="GO" id="GO:0005739">
    <property type="term" value="C:mitochondrion"/>
    <property type="evidence" value="ECO:0007669"/>
    <property type="project" value="GOC"/>
</dbReference>
<dbReference type="GO" id="GO:0045259">
    <property type="term" value="C:proton-transporting ATP synthase complex"/>
    <property type="evidence" value="ECO:0007669"/>
    <property type="project" value="UniProtKB-KW"/>
</dbReference>
<dbReference type="GO" id="GO:0005524">
    <property type="term" value="F:ATP binding"/>
    <property type="evidence" value="ECO:0007669"/>
    <property type="project" value="UniProtKB-UniRule"/>
</dbReference>
<dbReference type="GO" id="GO:0016887">
    <property type="term" value="F:ATP hydrolysis activity"/>
    <property type="evidence" value="ECO:0007669"/>
    <property type="project" value="InterPro"/>
</dbReference>
<dbReference type="GO" id="GO:0046933">
    <property type="term" value="F:proton-transporting ATP synthase activity, rotational mechanism"/>
    <property type="evidence" value="ECO:0007669"/>
    <property type="project" value="UniProtKB-UniRule"/>
</dbReference>
<dbReference type="GO" id="GO:0042776">
    <property type="term" value="P:proton motive force-driven mitochondrial ATP synthesis"/>
    <property type="evidence" value="ECO:0007669"/>
    <property type="project" value="TreeGrafter"/>
</dbReference>
<dbReference type="CDD" id="cd18110">
    <property type="entry name" value="ATP-synt_F1_beta_C"/>
    <property type="match status" value="1"/>
</dbReference>
<dbReference type="CDD" id="cd18115">
    <property type="entry name" value="ATP-synt_F1_beta_N"/>
    <property type="match status" value="1"/>
</dbReference>
<dbReference type="CDD" id="cd01133">
    <property type="entry name" value="F1-ATPase_beta_CD"/>
    <property type="match status" value="1"/>
</dbReference>
<dbReference type="FunFam" id="1.10.1140.10:FF:000001">
    <property type="entry name" value="ATP synthase subunit beta"/>
    <property type="match status" value="1"/>
</dbReference>
<dbReference type="FunFam" id="3.40.50.300:FF:000004">
    <property type="entry name" value="ATP synthase subunit beta"/>
    <property type="match status" value="1"/>
</dbReference>
<dbReference type="Gene3D" id="2.40.10.170">
    <property type="match status" value="1"/>
</dbReference>
<dbReference type="Gene3D" id="1.10.1140.10">
    <property type="entry name" value="Bovine Mitochondrial F1-atpase, Atp Synthase Beta Chain, Chain D, domain 3"/>
    <property type="match status" value="1"/>
</dbReference>
<dbReference type="Gene3D" id="3.40.50.300">
    <property type="entry name" value="P-loop containing nucleotide triphosphate hydrolases"/>
    <property type="match status" value="1"/>
</dbReference>
<dbReference type="HAMAP" id="MF_01347">
    <property type="entry name" value="ATP_synth_beta_bact"/>
    <property type="match status" value="1"/>
</dbReference>
<dbReference type="InterPro" id="IPR003593">
    <property type="entry name" value="AAA+_ATPase"/>
</dbReference>
<dbReference type="InterPro" id="IPR055190">
    <property type="entry name" value="ATP-synt_VA_C"/>
</dbReference>
<dbReference type="InterPro" id="IPR005722">
    <property type="entry name" value="ATP_synth_F1_bsu"/>
</dbReference>
<dbReference type="InterPro" id="IPR020003">
    <property type="entry name" value="ATPase_a/bsu_AS"/>
</dbReference>
<dbReference type="InterPro" id="IPR050053">
    <property type="entry name" value="ATPase_alpha/beta_chains"/>
</dbReference>
<dbReference type="InterPro" id="IPR004100">
    <property type="entry name" value="ATPase_F1/V1/A1_a/bsu_N"/>
</dbReference>
<dbReference type="InterPro" id="IPR036121">
    <property type="entry name" value="ATPase_F1/V1/A1_a/bsu_N_sf"/>
</dbReference>
<dbReference type="InterPro" id="IPR000194">
    <property type="entry name" value="ATPase_F1/V1/A1_a/bsu_nucl-bd"/>
</dbReference>
<dbReference type="InterPro" id="IPR024034">
    <property type="entry name" value="ATPase_F1/V1_b/a_C"/>
</dbReference>
<dbReference type="InterPro" id="IPR027417">
    <property type="entry name" value="P-loop_NTPase"/>
</dbReference>
<dbReference type="NCBIfam" id="TIGR01039">
    <property type="entry name" value="atpD"/>
    <property type="match status" value="1"/>
</dbReference>
<dbReference type="PANTHER" id="PTHR15184">
    <property type="entry name" value="ATP SYNTHASE"/>
    <property type="match status" value="1"/>
</dbReference>
<dbReference type="PANTHER" id="PTHR15184:SF71">
    <property type="entry name" value="ATP SYNTHASE SUBUNIT BETA, MITOCHONDRIAL"/>
    <property type="match status" value="1"/>
</dbReference>
<dbReference type="Pfam" id="PF00006">
    <property type="entry name" value="ATP-synt_ab"/>
    <property type="match status" value="1"/>
</dbReference>
<dbReference type="Pfam" id="PF02874">
    <property type="entry name" value="ATP-synt_ab_N"/>
    <property type="match status" value="1"/>
</dbReference>
<dbReference type="Pfam" id="PF22919">
    <property type="entry name" value="ATP-synt_VA_C"/>
    <property type="match status" value="1"/>
</dbReference>
<dbReference type="SMART" id="SM00382">
    <property type="entry name" value="AAA"/>
    <property type="match status" value="1"/>
</dbReference>
<dbReference type="SUPFAM" id="SSF47917">
    <property type="entry name" value="C-terminal domain of alpha and beta subunits of F1 ATP synthase"/>
    <property type="match status" value="1"/>
</dbReference>
<dbReference type="SUPFAM" id="SSF50615">
    <property type="entry name" value="N-terminal domain of alpha and beta subunits of F1 ATP synthase"/>
    <property type="match status" value="1"/>
</dbReference>
<dbReference type="SUPFAM" id="SSF52540">
    <property type="entry name" value="P-loop containing nucleoside triphosphate hydrolases"/>
    <property type="match status" value="1"/>
</dbReference>
<dbReference type="PROSITE" id="PS00152">
    <property type="entry name" value="ATPASE_ALPHA_BETA"/>
    <property type="match status" value="1"/>
</dbReference>
<accession>P26532</accession>
<sequence length="481" mass="52026">MTKKKTEKEKGINNGYITQVIGPVIDAVFSSGILPKIYNALEVQSKEGPIICEVQQLLGDNRVRAIAMSATDGLQRGVTVIDTQAPIAVPVGKATLGRIFNVLGQPVDNLSDSVGEDTLPIHRSAPAFTDLETKPAIFETGIKVVDLLAPYRRGGKIGLFGGAGVGKTVLIMELINNIAKAHGGVSVFGGVGERTREGNDLYMEMKESGVINETNLLESKVALVYGQMNEPPGARMRVGLTALTMAEYFRDINKQDVLLFIDNIFRFVQAGSEVSALLGRMPSAVGYQPTLGTEMGALQERITSTTQGSITSIQAVYVPADDLTDPAPATTFAHLDATTVLSRGLAAKGIYPAVDPLDSTSTMLQPLIVGDEHYKTAQLVKETLQRYKELQDIIAILGIDELSEEDRLVVDRARKIERFLSQPFFVAEVFTGSPGKYVDLENTIKGFNMILGGELDDLPEQAFYLVGDINEAISKAKTFKN</sequence>
<geneLocation type="chloroplast"/>
<feature type="chain" id="PRO_0000144547" description="ATP synthase subunit beta, chloroplastic">
    <location>
        <begin position="1"/>
        <end position="481"/>
    </location>
</feature>
<feature type="binding site" evidence="1">
    <location>
        <begin position="161"/>
        <end position="168"/>
    </location>
    <ligand>
        <name>ATP</name>
        <dbReference type="ChEBI" id="CHEBI:30616"/>
    </ligand>
</feature>
<reference key="1">
    <citation type="journal article" date="1992" name="Plant Mol. Biol.">
        <title>Nucleotide sequences of the atpB and the atpE genes of the brown alga Pylaiella littoralis (L.) Kjellm.</title>
        <authorList>
            <person name="Jouannic S."/>
            <person name="Kerbourc'H C."/>
            <person name="Kloareg B."/>
            <person name="Loiseaux-De Goer S."/>
        </authorList>
    </citation>
    <scope>NUCLEOTIDE SEQUENCE [GENOMIC DNA]</scope>
</reference>
<comment type="function">
    <text evidence="1">Produces ATP from ADP in the presence of a proton gradient across the membrane. The catalytic sites are hosted primarily by the beta subunits.</text>
</comment>
<comment type="catalytic activity">
    <reaction evidence="1">
        <text>ATP + H2O + 4 H(+)(in) = ADP + phosphate + 5 H(+)(out)</text>
        <dbReference type="Rhea" id="RHEA:57720"/>
        <dbReference type="ChEBI" id="CHEBI:15377"/>
        <dbReference type="ChEBI" id="CHEBI:15378"/>
        <dbReference type="ChEBI" id="CHEBI:30616"/>
        <dbReference type="ChEBI" id="CHEBI:43474"/>
        <dbReference type="ChEBI" id="CHEBI:456216"/>
        <dbReference type="EC" id="7.1.2.2"/>
    </reaction>
</comment>
<comment type="subunit">
    <text evidence="1">F-type ATPases have 2 components, CF(1) - the catalytic core - and CF(0) - the membrane proton channel. CF(1) has five subunits: alpha(3), beta(3), gamma(1), delta(1), epsilon(1). CF(0) has four main subunits: a(1), b(1), b'(1) and c(9-12).</text>
</comment>
<comment type="subcellular location">
    <subcellularLocation>
        <location evidence="1">Plastid</location>
        <location evidence="1">Chloroplast thylakoid membrane</location>
        <topology evidence="1">Peripheral membrane protein</topology>
    </subcellularLocation>
</comment>
<comment type="similarity">
    <text evidence="1">Belongs to the ATPase alpha/beta chains family.</text>
</comment>
<evidence type="ECO:0000255" key="1">
    <source>
        <dbReference type="HAMAP-Rule" id="MF_01347"/>
    </source>
</evidence>
<proteinExistence type="inferred from homology"/>
<name>ATPB_PYLLI</name>
<keyword id="KW-0066">ATP synthesis</keyword>
<keyword id="KW-0067">ATP-binding</keyword>
<keyword id="KW-0139">CF(1)</keyword>
<keyword id="KW-0150">Chloroplast</keyword>
<keyword id="KW-0375">Hydrogen ion transport</keyword>
<keyword id="KW-0406">Ion transport</keyword>
<keyword id="KW-0472">Membrane</keyword>
<keyword id="KW-0547">Nucleotide-binding</keyword>
<keyword id="KW-0934">Plastid</keyword>
<keyword id="KW-0793">Thylakoid</keyword>
<keyword id="KW-1278">Translocase</keyword>
<keyword id="KW-0813">Transport</keyword>
<organism>
    <name type="scientific">Pylaiella littoralis</name>
    <name type="common">Seaweed</name>
    <name type="synonym">Conferva littoralis</name>
    <dbReference type="NCBI Taxonomy" id="2885"/>
    <lineage>
        <taxon>Eukaryota</taxon>
        <taxon>Sar</taxon>
        <taxon>Stramenopiles</taxon>
        <taxon>Ochrophyta</taxon>
        <taxon>PX clade</taxon>
        <taxon>Phaeophyceae</taxon>
        <taxon>Ectocarpales</taxon>
        <taxon>Acinetosporaceae</taxon>
        <taxon>Pylaiella</taxon>
    </lineage>
</organism>
<gene>
    <name evidence="1" type="primary">atpB</name>
</gene>